<geneLocation type="chloroplast"/>
<reference key="1">
    <citation type="submission" date="2007-03" db="EMBL/GenBank/DDBJ databases">
        <title>Sequencing analysis of Barbarea verna chloroplast DNA.</title>
        <authorList>
            <person name="Hosouchi T."/>
            <person name="Tsuruoka H."/>
            <person name="Kotani H."/>
        </authorList>
    </citation>
    <scope>NUCLEOTIDE SEQUENCE [LARGE SCALE GENOMIC DNA]</scope>
</reference>
<evidence type="ECO:0000255" key="1">
    <source>
        <dbReference type="HAMAP-Rule" id="MF_01316"/>
    </source>
</evidence>
<organism>
    <name type="scientific">Barbarea verna</name>
    <name type="common">Land cress</name>
    <name type="synonym">Erysimum vernum</name>
    <dbReference type="NCBI Taxonomy" id="50458"/>
    <lineage>
        <taxon>Eukaryota</taxon>
        <taxon>Viridiplantae</taxon>
        <taxon>Streptophyta</taxon>
        <taxon>Embryophyta</taxon>
        <taxon>Tracheophyta</taxon>
        <taxon>Spermatophyta</taxon>
        <taxon>Magnoliopsida</taxon>
        <taxon>eudicotyledons</taxon>
        <taxon>Gunneridae</taxon>
        <taxon>Pentapetalae</taxon>
        <taxon>rosids</taxon>
        <taxon>malvids</taxon>
        <taxon>Brassicales</taxon>
        <taxon>Brassicaceae</taxon>
        <taxon>Cardamineae</taxon>
        <taxon>Barbarea</taxon>
    </lineage>
</organism>
<sequence>MLTLKLFVYTVVIFFVSLFIFGFLSNDPGRNPGREE</sequence>
<keyword id="KW-0150">Chloroplast</keyword>
<keyword id="KW-0472">Membrane</keyword>
<keyword id="KW-0602">Photosynthesis</keyword>
<keyword id="KW-0604">Photosystem II</keyword>
<keyword id="KW-0934">Plastid</keyword>
<keyword id="KW-0674">Reaction center</keyword>
<keyword id="KW-0793">Thylakoid</keyword>
<keyword id="KW-0812">Transmembrane</keyword>
<keyword id="KW-1133">Transmembrane helix</keyword>
<comment type="function">
    <text evidence="1">One of the components of the core complex of photosystem II (PSII), required for its stability and/or assembly. PSII is a light-driven water:plastoquinone oxidoreductase that uses light energy to abstract electrons from H(2)O, generating O(2) and a proton gradient subsequently used for ATP formation. It consists of a core antenna complex that captures photons, and an electron transfer chain that converts photonic excitation into a charge separation.</text>
</comment>
<comment type="subunit">
    <text evidence="1">PSII is composed of 1 copy each of membrane proteins PsbA, PsbB, PsbC, PsbD, PsbE, PsbF, PsbH, PsbI, PsbJ, PsbK, PsbL, PsbM, PsbT, PsbX, PsbY, PsbZ, Psb30/Ycf12, at least 3 peripheral proteins of the oxygen-evolving complex and a large number of cofactors. It forms dimeric complexes.</text>
</comment>
<comment type="subcellular location">
    <subcellularLocation>
        <location evidence="1">Plastid</location>
        <location evidence="1">Chloroplast thylakoid membrane</location>
        <topology evidence="1">Single-pass membrane protein</topology>
    </subcellularLocation>
</comment>
<comment type="similarity">
    <text evidence="1">Belongs to the PsbI family.</text>
</comment>
<accession>A4QK89</accession>
<dbReference type="EMBL" id="AP009370">
    <property type="protein sequence ID" value="BAF50094.1"/>
    <property type="molecule type" value="Genomic_DNA"/>
</dbReference>
<dbReference type="RefSeq" id="YP_001123270.1">
    <property type="nucleotide sequence ID" value="NC_009269.1"/>
</dbReference>
<dbReference type="SMR" id="A4QK89"/>
<dbReference type="GeneID" id="4961911"/>
<dbReference type="GO" id="GO:0009535">
    <property type="term" value="C:chloroplast thylakoid membrane"/>
    <property type="evidence" value="ECO:0007669"/>
    <property type="project" value="UniProtKB-SubCell"/>
</dbReference>
<dbReference type="GO" id="GO:0009539">
    <property type="term" value="C:photosystem II reaction center"/>
    <property type="evidence" value="ECO:0007669"/>
    <property type="project" value="InterPro"/>
</dbReference>
<dbReference type="GO" id="GO:0015979">
    <property type="term" value="P:photosynthesis"/>
    <property type="evidence" value="ECO:0007669"/>
    <property type="project" value="UniProtKB-UniRule"/>
</dbReference>
<dbReference type="HAMAP" id="MF_01316">
    <property type="entry name" value="PSII_PsbI"/>
    <property type="match status" value="1"/>
</dbReference>
<dbReference type="InterPro" id="IPR003686">
    <property type="entry name" value="PSII_PsbI"/>
</dbReference>
<dbReference type="InterPro" id="IPR037271">
    <property type="entry name" value="PSII_PsbI_sf"/>
</dbReference>
<dbReference type="NCBIfam" id="NF002735">
    <property type="entry name" value="PRK02655.1"/>
    <property type="match status" value="1"/>
</dbReference>
<dbReference type="PANTHER" id="PTHR35772">
    <property type="entry name" value="PHOTOSYSTEM II REACTION CENTER PROTEIN I"/>
    <property type="match status" value="1"/>
</dbReference>
<dbReference type="PANTHER" id="PTHR35772:SF1">
    <property type="entry name" value="PHOTOSYSTEM II REACTION CENTER PROTEIN I"/>
    <property type="match status" value="1"/>
</dbReference>
<dbReference type="Pfam" id="PF02532">
    <property type="entry name" value="PsbI"/>
    <property type="match status" value="1"/>
</dbReference>
<dbReference type="SUPFAM" id="SSF161041">
    <property type="entry name" value="Photosystem II reaction center protein I, PsbI"/>
    <property type="match status" value="1"/>
</dbReference>
<feature type="chain" id="PRO_0000298315" description="Photosystem II reaction center protein I">
    <location>
        <begin position="1"/>
        <end position="36"/>
    </location>
</feature>
<feature type="transmembrane region" description="Helical" evidence="1">
    <location>
        <begin position="4"/>
        <end position="24"/>
    </location>
</feature>
<name>PSBI_BARVE</name>
<gene>
    <name evidence="1" type="primary">psbI</name>
</gene>
<protein>
    <recommendedName>
        <fullName evidence="1">Photosystem II reaction center protein I</fullName>
        <shortName evidence="1">PSII-I</shortName>
    </recommendedName>
    <alternativeName>
        <fullName evidence="1">PSII 4.8 kDa protein</fullName>
    </alternativeName>
</protein>
<proteinExistence type="inferred from homology"/>